<comment type="function">
    <text evidence="1">Catalyzes the acyloin condensation reaction between C atoms 2 and 3 of pyruvate and glyceraldehyde 3-phosphate to yield 1-deoxy-D-xylulose-5-phosphate (DXP).</text>
</comment>
<comment type="catalytic activity">
    <reaction evidence="1">
        <text>D-glyceraldehyde 3-phosphate + pyruvate + H(+) = 1-deoxy-D-xylulose 5-phosphate + CO2</text>
        <dbReference type="Rhea" id="RHEA:12605"/>
        <dbReference type="ChEBI" id="CHEBI:15361"/>
        <dbReference type="ChEBI" id="CHEBI:15378"/>
        <dbReference type="ChEBI" id="CHEBI:16526"/>
        <dbReference type="ChEBI" id="CHEBI:57792"/>
        <dbReference type="ChEBI" id="CHEBI:59776"/>
        <dbReference type="EC" id="2.2.1.7"/>
    </reaction>
</comment>
<comment type="cofactor">
    <cofactor evidence="1">
        <name>Mg(2+)</name>
        <dbReference type="ChEBI" id="CHEBI:18420"/>
    </cofactor>
    <text evidence="1">Binds 1 Mg(2+) ion per subunit.</text>
</comment>
<comment type="cofactor">
    <cofactor evidence="1">
        <name>thiamine diphosphate</name>
        <dbReference type="ChEBI" id="CHEBI:58937"/>
    </cofactor>
    <text evidence="1">Binds 1 thiamine pyrophosphate per subunit.</text>
</comment>
<comment type="pathway">
    <text evidence="1">Metabolic intermediate biosynthesis; 1-deoxy-D-xylulose 5-phosphate biosynthesis; 1-deoxy-D-xylulose 5-phosphate from D-glyceraldehyde 3-phosphate and pyruvate: step 1/1.</text>
</comment>
<comment type="subunit">
    <text evidence="1">Homodimer.</text>
</comment>
<comment type="similarity">
    <text evidence="1">Belongs to the transketolase family. DXPS subfamily.</text>
</comment>
<feature type="chain" id="PRO_1000119539" description="1-deoxy-D-xylulose-5-phosphate synthase">
    <location>
        <begin position="1"/>
        <end position="630"/>
    </location>
</feature>
<feature type="binding site" evidence="1">
    <location>
        <position position="72"/>
    </location>
    <ligand>
        <name>thiamine diphosphate</name>
        <dbReference type="ChEBI" id="CHEBI:58937"/>
    </ligand>
</feature>
<feature type="binding site" evidence="1">
    <location>
        <begin position="113"/>
        <end position="115"/>
    </location>
    <ligand>
        <name>thiamine diphosphate</name>
        <dbReference type="ChEBI" id="CHEBI:58937"/>
    </ligand>
</feature>
<feature type="binding site" evidence="1">
    <location>
        <position position="144"/>
    </location>
    <ligand>
        <name>Mg(2+)</name>
        <dbReference type="ChEBI" id="CHEBI:18420"/>
    </ligand>
</feature>
<feature type="binding site" evidence="1">
    <location>
        <begin position="145"/>
        <end position="146"/>
    </location>
    <ligand>
        <name>thiamine diphosphate</name>
        <dbReference type="ChEBI" id="CHEBI:58937"/>
    </ligand>
</feature>
<feature type="binding site" evidence="1">
    <location>
        <position position="173"/>
    </location>
    <ligand>
        <name>Mg(2+)</name>
        <dbReference type="ChEBI" id="CHEBI:18420"/>
    </ligand>
</feature>
<feature type="binding site" evidence="1">
    <location>
        <position position="173"/>
    </location>
    <ligand>
        <name>thiamine diphosphate</name>
        <dbReference type="ChEBI" id="CHEBI:58937"/>
    </ligand>
</feature>
<feature type="binding site" evidence="1">
    <location>
        <position position="284"/>
    </location>
    <ligand>
        <name>thiamine diphosphate</name>
        <dbReference type="ChEBI" id="CHEBI:58937"/>
    </ligand>
</feature>
<feature type="binding site" evidence="1">
    <location>
        <position position="367"/>
    </location>
    <ligand>
        <name>thiamine diphosphate</name>
        <dbReference type="ChEBI" id="CHEBI:58937"/>
    </ligand>
</feature>
<sequence length="630" mass="69411">MDLTQIQNPSFLKDMSISELEGLSEDIRKFLIEELSQTGGHIAPNLGVVELTIALHKLFDSPQDKFLWDVGHQSYVHKILTGRAKEFGTLRQYQGLCGFPKRCESEHDVWETGHSSTSLSAAMGMALARDLKKTKEYVIPIIGDGALTGGMALEALNHIGHEKTDMIVILNDNEMSIAPNVGALHNVLGRLRTAGKYHWVKDELEYILKKIPAVGGKVAATAEKIKDSLKYLLVSGVFFEELGFTYLGPVDGHDYEKLFETLQYAKKTKGPVLVHVITKKGKGYKPAESDVIGTWHGTGPYKIESGDFVKPKEVAPAWSAVVSETVLKLARADERIVAITPAMPVGSKLEKFQKEFPDRMIDVGIAEQHATTMAAGMATQGMKPFLAIYSTFLQRAYDQVVHDICRQNLNVFIGIDRSGLVGADGETHQGVFDISFLRHLPNMVLMMPKDENEGQHLVYTAMQYEDGPIALRYARGNGLGVHMDEELKAIPIGTWETLKEGTQAAILTFGTTIPMAMEAAERLEKAGVSVKVVNARFIKPMDEAYLHDLLGKNIPILTIEEACLIGGFGTGVVEFASENGYHSALVERMGIPDRFIEHGSVTKLLEEIGLTTDAVVDRIHTMIPSKQKRA</sequence>
<organism>
    <name type="scientific">Bacillus cereus (strain B4264)</name>
    <dbReference type="NCBI Taxonomy" id="405532"/>
    <lineage>
        <taxon>Bacteria</taxon>
        <taxon>Bacillati</taxon>
        <taxon>Bacillota</taxon>
        <taxon>Bacilli</taxon>
        <taxon>Bacillales</taxon>
        <taxon>Bacillaceae</taxon>
        <taxon>Bacillus</taxon>
        <taxon>Bacillus cereus group</taxon>
    </lineage>
</organism>
<proteinExistence type="inferred from homology"/>
<gene>
    <name evidence="1" type="primary">dxs</name>
    <name type="ordered locus">BCB4264_A4287</name>
</gene>
<keyword id="KW-0414">Isoprene biosynthesis</keyword>
<keyword id="KW-0460">Magnesium</keyword>
<keyword id="KW-0479">Metal-binding</keyword>
<keyword id="KW-0784">Thiamine biosynthesis</keyword>
<keyword id="KW-0786">Thiamine pyrophosphate</keyword>
<keyword id="KW-0808">Transferase</keyword>
<accession>B7HB48</accession>
<reference key="1">
    <citation type="submission" date="2008-10" db="EMBL/GenBank/DDBJ databases">
        <title>Genome sequence of Bacillus cereus B4264.</title>
        <authorList>
            <person name="Dodson R.J."/>
            <person name="Durkin A.S."/>
            <person name="Rosovitz M.J."/>
            <person name="Rasko D.A."/>
            <person name="Hoffmaster A."/>
            <person name="Ravel J."/>
            <person name="Sutton G."/>
        </authorList>
    </citation>
    <scope>NUCLEOTIDE SEQUENCE [LARGE SCALE GENOMIC DNA]</scope>
    <source>
        <strain>B4264</strain>
    </source>
</reference>
<protein>
    <recommendedName>
        <fullName evidence="1">1-deoxy-D-xylulose-5-phosphate synthase</fullName>
        <ecNumber evidence="1">2.2.1.7</ecNumber>
    </recommendedName>
    <alternativeName>
        <fullName evidence="1">1-deoxyxylulose-5-phosphate synthase</fullName>
        <shortName evidence="1">DXP synthase</shortName>
        <shortName evidence="1">DXPS</shortName>
    </alternativeName>
</protein>
<evidence type="ECO:0000255" key="1">
    <source>
        <dbReference type="HAMAP-Rule" id="MF_00315"/>
    </source>
</evidence>
<name>DXS_BACC4</name>
<dbReference type="EC" id="2.2.1.7" evidence="1"/>
<dbReference type="EMBL" id="CP001176">
    <property type="protein sequence ID" value="ACK62761.1"/>
    <property type="molecule type" value="Genomic_DNA"/>
</dbReference>
<dbReference type="RefSeq" id="WP_000366452.1">
    <property type="nucleotide sequence ID" value="NC_011725.1"/>
</dbReference>
<dbReference type="SMR" id="B7HB48"/>
<dbReference type="GeneID" id="72450860"/>
<dbReference type="KEGG" id="bcb:BCB4264_A4287"/>
<dbReference type="HOGENOM" id="CLU_009227_1_4_9"/>
<dbReference type="UniPathway" id="UPA00064">
    <property type="reaction ID" value="UER00091"/>
</dbReference>
<dbReference type="Proteomes" id="UP000007096">
    <property type="component" value="Chromosome"/>
</dbReference>
<dbReference type="GO" id="GO:0005829">
    <property type="term" value="C:cytosol"/>
    <property type="evidence" value="ECO:0007669"/>
    <property type="project" value="TreeGrafter"/>
</dbReference>
<dbReference type="GO" id="GO:0008661">
    <property type="term" value="F:1-deoxy-D-xylulose-5-phosphate synthase activity"/>
    <property type="evidence" value="ECO:0007669"/>
    <property type="project" value="UniProtKB-UniRule"/>
</dbReference>
<dbReference type="GO" id="GO:0000287">
    <property type="term" value="F:magnesium ion binding"/>
    <property type="evidence" value="ECO:0007669"/>
    <property type="project" value="UniProtKB-UniRule"/>
</dbReference>
<dbReference type="GO" id="GO:0030976">
    <property type="term" value="F:thiamine pyrophosphate binding"/>
    <property type="evidence" value="ECO:0007669"/>
    <property type="project" value="UniProtKB-UniRule"/>
</dbReference>
<dbReference type="GO" id="GO:0052865">
    <property type="term" value="P:1-deoxy-D-xylulose 5-phosphate biosynthetic process"/>
    <property type="evidence" value="ECO:0007669"/>
    <property type="project" value="UniProtKB-UniPathway"/>
</dbReference>
<dbReference type="GO" id="GO:0019288">
    <property type="term" value="P:isopentenyl diphosphate biosynthetic process, methylerythritol 4-phosphate pathway"/>
    <property type="evidence" value="ECO:0007669"/>
    <property type="project" value="TreeGrafter"/>
</dbReference>
<dbReference type="GO" id="GO:0016114">
    <property type="term" value="P:terpenoid biosynthetic process"/>
    <property type="evidence" value="ECO:0007669"/>
    <property type="project" value="UniProtKB-UniRule"/>
</dbReference>
<dbReference type="GO" id="GO:0009228">
    <property type="term" value="P:thiamine biosynthetic process"/>
    <property type="evidence" value="ECO:0007669"/>
    <property type="project" value="UniProtKB-UniRule"/>
</dbReference>
<dbReference type="CDD" id="cd02007">
    <property type="entry name" value="TPP_DXS"/>
    <property type="match status" value="1"/>
</dbReference>
<dbReference type="CDD" id="cd07033">
    <property type="entry name" value="TPP_PYR_DXS_TK_like"/>
    <property type="match status" value="1"/>
</dbReference>
<dbReference type="FunFam" id="3.40.50.920:FF:000002">
    <property type="entry name" value="1-deoxy-D-xylulose-5-phosphate synthase"/>
    <property type="match status" value="1"/>
</dbReference>
<dbReference type="FunFam" id="3.40.50.970:FF:000030">
    <property type="entry name" value="1-deoxy-D-xylulose-5-phosphate synthase"/>
    <property type="match status" value="1"/>
</dbReference>
<dbReference type="Gene3D" id="3.40.50.920">
    <property type="match status" value="1"/>
</dbReference>
<dbReference type="Gene3D" id="3.40.50.970">
    <property type="match status" value="2"/>
</dbReference>
<dbReference type="HAMAP" id="MF_00315">
    <property type="entry name" value="DXP_synth"/>
    <property type="match status" value="1"/>
</dbReference>
<dbReference type="InterPro" id="IPR005477">
    <property type="entry name" value="Dxylulose-5-P_synthase"/>
</dbReference>
<dbReference type="InterPro" id="IPR029061">
    <property type="entry name" value="THDP-binding"/>
</dbReference>
<dbReference type="InterPro" id="IPR009014">
    <property type="entry name" value="Transketo_C/PFOR_II"/>
</dbReference>
<dbReference type="InterPro" id="IPR005475">
    <property type="entry name" value="Transketolase-like_Pyr-bd"/>
</dbReference>
<dbReference type="InterPro" id="IPR020826">
    <property type="entry name" value="Transketolase_BS"/>
</dbReference>
<dbReference type="InterPro" id="IPR033248">
    <property type="entry name" value="Transketolase_C"/>
</dbReference>
<dbReference type="InterPro" id="IPR049557">
    <property type="entry name" value="Transketolase_CS"/>
</dbReference>
<dbReference type="NCBIfam" id="TIGR00204">
    <property type="entry name" value="dxs"/>
    <property type="match status" value="1"/>
</dbReference>
<dbReference type="NCBIfam" id="NF003933">
    <property type="entry name" value="PRK05444.2-2"/>
    <property type="match status" value="1"/>
</dbReference>
<dbReference type="PANTHER" id="PTHR43322">
    <property type="entry name" value="1-D-DEOXYXYLULOSE 5-PHOSPHATE SYNTHASE-RELATED"/>
    <property type="match status" value="1"/>
</dbReference>
<dbReference type="PANTHER" id="PTHR43322:SF5">
    <property type="entry name" value="1-DEOXY-D-XYLULOSE-5-PHOSPHATE SYNTHASE, CHLOROPLASTIC"/>
    <property type="match status" value="1"/>
</dbReference>
<dbReference type="Pfam" id="PF13292">
    <property type="entry name" value="DXP_synthase_N"/>
    <property type="match status" value="1"/>
</dbReference>
<dbReference type="Pfam" id="PF02779">
    <property type="entry name" value="Transket_pyr"/>
    <property type="match status" value="1"/>
</dbReference>
<dbReference type="Pfam" id="PF02780">
    <property type="entry name" value="Transketolase_C"/>
    <property type="match status" value="1"/>
</dbReference>
<dbReference type="SMART" id="SM00861">
    <property type="entry name" value="Transket_pyr"/>
    <property type="match status" value="1"/>
</dbReference>
<dbReference type="SUPFAM" id="SSF52518">
    <property type="entry name" value="Thiamin diphosphate-binding fold (THDP-binding)"/>
    <property type="match status" value="2"/>
</dbReference>
<dbReference type="SUPFAM" id="SSF52922">
    <property type="entry name" value="TK C-terminal domain-like"/>
    <property type="match status" value="1"/>
</dbReference>
<dbReference type="PROSITE" id="PS00801">
    <property type="entry name" value="TRANSKETOLASE_1"/>
    <property type="match status" value="1"/>
</dbReference>
<dbReference type="PROSITE" id="PS00802">
    <property type="entry name" value="TRANSKETOLASE_2"/>
    <property type="match status" value="1"/>
</dbReference>